<comment type="similarity">
    <text evidence="2">Belongs to the HypD family.</text>
</comment>
<sequence length="379" mass="41339">MKYVDEFRDGATARQLAARIAAEADPARQYRLMEFCGGHTHAIFRYGIPDLLPASVRLIHGPGCPVCVMPIGRLDMAIELARRPEVILCTYGDMLRVPASGRVSLLKARAESAAVRMLYSPAEALKLAQDNPSKEVVFFAIGFETTTPPTALVIEQAQRLGLKNFSVFCNHVLTPAAMHAILATPEARAGTLQLDGFIGPAHVSTVIGSAPYAPFPQQYGTPLVIAGFEPLDLLQALLMLVRQLNEGRAEVENQFTRAVTAEGNRKAKALTERVFEVRESFEWRGLGAVPHSALQIREAFAEFNAERRFALEPRTGLENKACECPAILRGAKSPRDCKLFGNPCTPDNPLGSCMVSSEGACAAWYAYGRQRQAAVEVAR</sequence>
<proteinExistence type="inferred from homology"/>
<name>HUPD_AZOCH</name>
<organism>
    <name type="scientific">Azotobacter chroococcum mcd 1</name>
    <dbReference type="NCBI Taxonomy" id="355"/>
    <lineage>
        <taxon>Bacteria</taxon>
        <taxon>Pseudomonadati</taxon>
        <taxon>Pseudomonadota</taxon>
        <taxon>Gammaproteobacteria</taxon>
        <taxon>Pseudomonadales</taxon>
        <taxon>Pseudomonadaceae</taxon>
        <taxon>Azotobacter</taxon>
    </lineage>
</organism>
<feature type="chain" id="PRO_0000201447" description="Hydrogenase expression/formation protein HupD">
    <location>
        <begin position="1"/>
        <end position="379"/>
    </location>
</feature>
<feature type="binding site" evidence="1">
    <location>
        <position position="36"/>
    </location>
    <ligand>
        <name>Fe cation</name>
        <dbReference type="ChEBI" id="CHEBI:24875"/>
    </ligand>
</feature>
<feature type="binding site" evidence="1">
    <location>
        <position position="64"/>
    </location>
    <ligand>
        <name>Fe cation</name>
        <dbReference type="ChEBI" id="CHEBI:24875"/>
    </ligand>
</feature>
<feature type="binding site" evidence="1">
    <location>
        <position position="67"/>
    </location>
    <ligand>
        <name>Fe cation</name>
        <dbReference type="ChEBI" id="CHEBI:24875"/>
    </ligand>
</feature>
<dbReference type="EMBL" id="M92282">
    <property type="protein sequence ID" value="AAA22136.1"/>
    <property type="molecule type" value="Genomic_DNA"/>
</dbReference>
<dbReference type="PIR" id="I39743">
    <property type="entry name" value="I39743"/>
</dbReference>
<dbReference type="SMR" id="P42033"/>
<dbReference type="GO" id="GO:0051539">
    <property type="term" value="F:4 iron, 4 sulfur cluster binding"/>
    <property type="evidence" value="ECO:0007669"/>
    <property type="project" value="TreeGrafter"/>
</dbReference>
<dbReference type="GO" id="GO:0070025">
    <property type="term" value="F:carbon monoxide binding"/>
    <property type="evidence" value="ECO:0007669"/>
    <property type="project" value="TreeGrafter"/>
</dbReference>
<dbReference type="GO" id="GO:0005506">
    <property type="term" value="F:iron ion binding"/>
    <property type="evidence" value="ECO:0007669"/>
    <property type="project" value="TreeGrafter"/>
</dbReference>
<dbReference type="GO" id="GO:0051604">
    <property type="term" value="P:protein maturation"/>
    <property type="evidence" value="ECO:0007669"/>
    <property type="project" value="TreeGrafter"/>
</dbReference>
<dbReference type="Gene3D" id="6.10.20.100">
    <property type="match status" value="1"/>
</dbReference>
<dbReference type="Gene3D" id="3.40.50.11740">
    <property type="entry name" value="HypD, alpha/beta domain 2"/>
    <property type="match status" value="2"/>
</dbReference>
<dbReference type="InterPro" id="IPR002780">
    <property type="entry name" value="Hyd_form_HypD"/>
</dbReference>
<dbReference type="InterPro" id="IPR042243">
    <property type="entry name" value="HypD_1"/>
</dbReference>
<dbReference type="InterPro" id="IPR042244">
    <property type="entry name" value="HypD_2_sf"/>
</dbReference>
<dbReference type="NCBIfam" id="TIGR00075">
    <property type="entry name" value="hypD"/>
    <property type="match status" value="1"/>
</dbReference>
<dbReference type="PANTHER" id="PTHR30149:SF0">
    <property type="entry name" value="HYDROGENASE MATURATION FACTOR HYPD"/>
    <property type="match status" value="1"/>
</dbReference>
<dbReference type="PANTHER" id="PTHR30149">
    <property type="entry name" value="HYDROGENASE PROTEIN ASSEMBLY PROTEIN HYPD"/>
    <property type="match status" value="1"/>
</dbReference>
<dbReference type="Pfam" id="PF01924">
    <property type="entry name" value="HypD"/>
    <property type="match status" value="1"/>
</dbReference>
<dbReference type="PIRSF" id="PIRSF005622">
    <property type="entry name" value="Hydrgn_mat_hypD"/>
    <property type="match status" value="1"/>
</dbReference>
<keyword id="KW-0408">Iron</keyword>
<keyword id="KW-0479">Metal-binding</keyword>
<evidence type="ECO:0000250" key="1">
    <source>
        <dbReference type="UniProtKB" id="P24192"/>
    </source>
</evidence>
<evidence type="ECO:0000305" key="2"/>
<reference key="1">
    <citation type="journal article" date="1992" name="FEMS Microbiol. Lett.">
        <title>Characterization of two genes (hupD and hupE) required for hydrogenase activity in Azotobacter chroococcum.</title>
        <authorList>
            <person name="Du L."/>
            <person name="Stejskal F."/>
            <person name="Tibelius K.H."/>
        </authorList>
    </citation>
    <scope>NUCLEOTIDE SEQUENCE [GENOMIC DNA]</scope>
</reference>
<gene>
    <name type="primary">hupD</name>
</gene>
<protein>
    <recommendedName>
        <fullName>Hydrogenase expression/formation protein HupD</fullName>
    </recommendedName>
</protein>
<accession>P42033</accession>